<proteinExistence type="evidence at transcript level"/>
<evidence type="ECO:0000250" key="1"/>
<feature type="peptide" id="PRO_0000044080" description="Early nodulin-40">
    <location>
        <begin position="1"/>
        <end position="13"/>
    </location>
</feature>
<gene>
    <name type="primary">ENOD40</name>
</gene>
<sequence>MKLLCWQKSIHGS</sequence>
<organism>
    <name type="scientific">Vicia sativa</name>
    <name type="common">Spring vetch</name>
    <name type="synonym">Tare</name>
    <dbReference type="NCBI Taxonomy" id="3908"/>
    <lineage>
        <taxon>Eukaryota</taxon>
        <taxon>Viridiplantae</taxon>
        <taxon>Streptophyta</taxon>
        <taxon>Embryophyta</taxon>
        <taxon>Tracheophyta</taxon>
        <taxon>Spermatophyta</taxon>
        <taxon>Magnoliopsida</taxon>
        <taxon>eudicotyledons</taxon>
        <taxon>Gunneridae</taxon>
        <taxon>Pentapetalae</taxon>
        <taxon>rosids</taxon>
        <taxon>fabids</taxon>
        <taxon>Fabales</taxon>
        <taxon>Fabaceae</taxon>
        <taxon>Papilionoideae</taxon>
        <taxon>50 kb inversion clade</taxon>
        <taxon>NPAAA clade</taxon>
        <taxon>Hologalegina</taxon>
        <taxon>IRL clade</taxon>
        <taxon>Fabeae</taxon>
        <taxon>Vicia</taxon>
    </lineage>
</organism>
<name>NO40_VICSA</name>
<protein>
    <recommendedName>
        <fullName>Early nodulin-40</fullName>
    </recommendedName>
</protein>
<comment type="function">
    <text evidence="1">Modulates the action of auxin, and may function as plant growth regulator that alters phytohormone responses.</text>
</comment>
<comment type="developmental stage">
    <text>Expressed during rhizobium-induced nodule formation. In 4-day old nodules it is found in all the cells of the center of the nodule primordium and also occurs in the region of the root pericycle facing the nodule primordium. At day 5, expression is seen in the complete central tissue. At day 20 expressed in the complete prefixation zone II, and in the proximal part of this zone it is found only in the infected cells but not in the uninfected cells. At the transition of prefixation zone II into interzone II-III expression decreases in the infected cells. In the fixation zone III, expression is induced in the uninfected cells and in the proximal part of this zone it is undetectable. Present at high levels in the pericycle of the nodule vascular bundle.</text>
</comment>
<reference key="1">
    <citation type="journal article" date="1995" name="Plant Mol. Biol.">
        <title>VsENOD5, VsENOD12 and VsENOD40 expression during Rhizobium-induced nodule formation on Vicia sativa roots.</title>
        <authorList>
            <person name="Vijn I."/>
            <person name="Yang W.-C."/>
            <person name="Pallisgaard N."/>
            <person name="Oestergaard Jensen E."/>
            <person name="van Kammen A."/>
            <person name="Bisseling T."/>
        </authorList>
    </citation>
    <scope>NUCLEOTIDE SEQUENCE [MRNA]</scope>
    <source>
        <strain>cv. Nigra</strain>
        <tissue>Root nodule</tissue>
    </source>
</reference>
<dbReference type="EMBL" id="X83683">
    <property type="protein sequence ID" value="CAB37926.1"/>
    <property type="molecule type" value="mRNA"/>
</dbReference>
<dbReference type="PIR" id="S60046">
    <property type="entry name" value="S60046"/>
</dbReference>
<dbReference type="GO" id="GO:0009877">
    <property type="term" value="P:nodulation"/>
    <property type="evidence" value="ECO:0007669"/>
    <property type="project" value="UniProtKB-KW"/>
</dbReference>
<dbReference type="InterPro" id="IPR013186">
    <property type="entry name" value="ENOD40"/>
</dbReference>
<dbReference type="Pfam" id="PF08247">
    <property type="entry name" value="ENOD40"/>
    <property type="match status" value="1"/>
</dbReference>
<keyword id="KW-0536">Nodulation</keyword>
<accession>P55961</accession>